<reference key="1">
    <citation type="journal article" date="2009" name="J. Bacteriol.">
        <title>Genome sequences of three Agrobacterium biovars help elucidate the evolution of multichromosome genomes in bacteria.</title>
        <authorList>
            <person name="Slater S.C."/>
            <person name="Goldman B.S."/>
            <person name="Goodner B."/>
            <person name="Setubal J.C."/>
            <person name="Farrand S.K."/>
            <person name="Nester E.W."/>
            <person name="Burr T.J."/>
            <person name="Banta L."/>
            <person name="Dickerman A.W."/>
            <person name="Paulsen I."/>
            <person name="Otten L."/>
            <person name="Suen G."/>
            <person name="Welch R."/>
            <person name="Almeida N.F."/>
            <person name="Arnold F."/>
            <person name="Burton O.T."/>
            <person name="Du Z."/>
            <person name="Ewing A."/>
            <person name="Godsy E."/>
            <person name="Heisel S."/>
            <person name="Houmiel K.L."/>
            <person name="Jhaveri J."/>
            <person name="Lu J."/>
            <person name="Miller N.M."/>
            <person name="Norton S."/>
            <person name="Chen Q."/>
            <person name="Phoolcharoen W."/>
            <person name="Ohlin V."/>
            <person name="Ondrusek D."/>
            <person name="Pride N."/>
            <person name="Stricklin S.L."/>
            <person name="Sun J."/>
            <person name="Wheeler C."/>
            <person name="Wilson L."/>
            <person name="Zhu H."/>
            <person name="Wood D.W."/>
        </authorList>
    </citation>
    <scope>NUCLEOTIDE SEQUENCE [LARGE SCALE GENOMIC DNA]</scope>
    <source>
        <strain>K84 / ATCC BAA-868</strain>
    </source>
</reference>
<dbReference type="EC" id="3.4.24.-" evidence="1"/>
<dbReference type="EMBL" id="CP000628">
    <property type="protein sequence ID" value="ACM28521.1"/>
    <property type="molecule type" value="Genomic_DNA"/>
</dbReference>
<dbReference type="RefSeq" id="WP_007698724.1">
    <property type="nucleotide sequence ID" value="NC_011985.1"/>
</dbReference>
<dbReference type="STRING" id="311403.Arad_4929"/>
<dbReference type="KEGG" id="ara:Arad_4929"/>
<dbReference type="eggNOG" id="COG0501">
    <property type="taxonomic scope" value="Bacteria"/>
</dbReference>
<dbReference type="HOGENOM" id="CLU_042266_3_0_5"/>
<dbReference type="Proteomes" id="UP000001600">
    <property type="component" value="Chromosome 1"/>
</dbReference>
<dbReference type="GO" id="GO:0005886">
    <property type="term" value="C:plasma membrane"/>
    <property type="evidence" value="ECO:0007669"/>
    <property type="project" value="UniProtKB-SubCell"/>
</dbReference>
<dbReference type="GO" id="GO:0004222">
    <property type="term" value="F:metalloendopeptidase activity"/>
    <property type="evidence" value="ECO:0007669"/>
    <property type="project" value="UniProtKB-UniRule"/>
</dbReference>
<dbReference type="GO" id="GO:0008270">
    <property type="term" value="F:zinc ion binding"/>
    <property type="evidence" value="ECO:0007669"/>
    <property type="project" value="UniProtKB-UniRule"/>
</dbReference>
<dbReference type="GO" id="GO:0006508">
    <property type="term" value="P:proteolysis"/>
    <property type="evidence" value="ECO:0007669"/>
    <property type="project" value="UniProtKB-KW"/>
</dbReference>
<dbReference type="CDD" id="cd07336">
    <property type="entry name" value="M48B_HtpX_like"/>
    <property type="match status" value="1"/>
</dbReference>
<dbReference type="Gene3D" id="3.30.2010.10">
    <property type="entry name" value="Metalloproteases ('zincins'), catalytic domain"/>
    <property type="match status" value="1"/>
</dbReference>
<dbReference type="HAMAP" id="MF_00188">
    <property type="entry name" value="Pept_M48_protease_HtpX"/>
    <property type="match status" value="1"/>
</dbReference>
<dbReference type="InterPro" id="IPR050083">
    <property type="entry name" value="HtpX_protease"/>
</dbReference>
<dbReference type="InterPro" id="IPR022919">
    <property type="entry name" value="Pept_M48_protease_HtpX"/>
</dbReference>
<dbReference type="InterPro" id="IPR001915">
    <property type="entry name" value="Peptidase_M48"/>
</dbReference>
<dbReference type="NCBIfam" id="NF002363">
    <property type="entry name" value="PRK01345.1"/>
    <property type="match status" value="1"/>
</dbReference>
<dbReference type="NCBIfam" id="NF002826">
    <property type="entry name" value="PRK03001.1"/>
    <property type="match status" value="1"/>
</dbReference>
<dbReference type="PANTHER" id="PTHR43221">
    <property type="entry name" value="PROTEASE HTPX"/>
    <property type="match status" value="1"/>
</dbReference>
<dbReference type="PANTHER" id="PTHR43221:SF1">
    <property type="entry name" value="PROTEASE HTPX"/>
    <property type="match status" value="1"/>
</dbReference>
<dbReference type="Pfam" id="PF01435">
    <property type="entry name" value="Peptidase_M48"/>
    <property type="match status" value="1"/>
</dbReference>
<dbReference type="PROSITE" id="PS00142">
    <property type="entry name" value="ZINC_PROTEASE"/>
    <property type="match status" value="1"/>
</dbReference>
<name>HTPX_RHIR8</name>
<protein>
    <recommendedName>
        <fullName evidence="1">Protease HtpX homolog</fullName>
        <ecNumber evidence="1">3.4.24.-</ecNumber>
    </recommendedName>
</protein>
<proteinExistence type="inferred from homology"/>
<organism>
    <name type="scientific">Rhizobium rhizogenes (strain K84 / ATCC BAA-868)</name>
    <name type="common">Agrobacterium radiobacter</name>
    <dbReference type="NCBI Taxonomy" id="311403"/>
    <lineage>
        <taxon>Bacteria</taxon>
        <taxon>Pseudomonadati</taxon>
        <taxon>Pseudomonadota</taxon>
        <taxon>Alphaproteobacteria</taxon>
        <taxon>Hyphomicrobiales</taxon>
        <taxon>Rhizobiaceae</taxon>
        <taxon>Rhizobium/Agrobacterium group</taxon>
        <taxon>Rhizobium</taxon>
    </lineage>
</organism>
<keyword id="KW-0997">Cell inner membrane</keyword>
<keyword id="KW-1003">Cell membrane</keyword>
<keyword id="KW-0378">Hydrolase</keyword>
<keyword id="KW-0472">Membrane</keyword>
<keyword id="KW-0479">Metal-binding</keyword>
<keyword id="KW-0482">Metalloprotease</keyword>
<keyword id="KW-0645">Protease</keyword>
<keyword id="KW-0812">Transmembrane</keyword>
<keyword id="KW-1133">Transmembrane helix</keyword>
<keyword id="KW-0862">Zinc</keyword>
<sequence length="328" mass="34742">MNLMRTAMLLAFMTALFMGVGYLIGGQSGMMIAFVAAAGMNFFSYWNSDRMVLSTYGAQEVDERSAPEFYGIVRDLARNAGLPMPKVYLYDNPQPNAFATGRNPQNAAVAASTGLLHALTPQEVAGVMAHELAHVQNRDTLTMTITATLAGAISMLGNFAFFFGGRRDNNNPLGAIGVLAAMIVAPLAAMLVQMAISRTREYSADRRGAEICGNPLWLASALGKIARGAAHIPNEEAEGHPATAHMFIINPLSGARMDNLFSTHPDTENRIAALHEMAQYGGGTGPSVGTPTRSGSTGPAMTANPERKSRSVPNTGRGGSQPPKGPWS</sequence>
<evidence type="ECO:0000255" key="1">
    <source>
        <dbReference type="HAMAP-Rule" id="MF_00188"/>
    </source>
</evidence>
<evidence type="ECO:0000256" key="2">
    <source>
        <dbReference type="SAM" id="MobiDB-lite"/>
    </source>
</evidence>
<feature type="chain" id="PRO_1000124218" description="Protease HtpX homolog">
    <location>
        <begin position="1"/>
        <end position="328"/>
    </location>
</feature>
<feature type="transmembrane region" description="Helical" evidence="1">
    <location>
        <begin position="6"/>
        <end position="26"/>
    </location>
</feature>
<feature type="transmembrane region" description="Helical" evidence="1">
    <location>
        <begin position="28"/>
        <end position="48"/>
    </location>
</feature>
<feature type="transmembrane region" description="Helical" evidence="1">
    <location>
        <begin position="145"/>
        <end position="165"/>
    </location>
</feature>
<feature type="transmembrane region" description="Helical" evidence="1">
    <location>
        <begin position="172"/>
        <end position="192"/>
    </location>
</feature>
<feature type="region of interest" description="Disordered" evidence="2">
    <location>
        <begin position="279"/>
        <end position="328"/>
    </location>
</feature>
<feature type="compositionally biased region" description="Low complexity" evidence="2">
    <location>
        <begin position="287"/>
        <end position="299"/>
    </location>
</feature>
<feature type="active site" evidence="1">
    <location>
        <position position="131"/>
    </location>
</feature>
<feature type="binding site" evidence="1">
    <location>
        <position position="130"/>
    </location>
    <ligand>
        <name>Zn(2+)</name>
        <dbReference type="ChEBI" id="CHEBI:29105"/>
        <note>catalytic</note>
    </ligand>
</feature>
<feature type="binding site" evidence="1">
    <location>
        <position position="134"/>
    </location>
    <ligand>
        <name>Zn(2+)</name>
        <dbReference type="ChEBI" id="CHEBI:29105"/>
        <note>catalytic</note>
    </ligand>
</feature>
<feature type="binding site" evidence="1">
    <location>
        <position position="201"/>
    </location>
    <ligand>
        <name>Zn(2+)</name>
        <dbReference type="ChEBI" id="CHEBI:29105"/>
        <note>catalytic</note>
    </ligand>
</feature>
<accession>B9JEV2</accession>
<gene>
    <name evidence="1" type="primary">htpX</name>
    <name type="ordered locus">Arad_4929</name>
</gene>
<comment type="cofactor">
    <cofactor evidence="1">
        <name>Zn(2+)</name>
        <dbReference type="ChEBI" id="CHEBI:29105"/>
    </cofactor>
    <text evidence="1">Binds 1 zinc ion per subunit.</text>
</comment>
<comment type="subcellular location">
    <subcellularLocation>
        <location evidence="1">Cell inner membrane</location>
        <topology evidence="1">Multi-pass membrane protein</topology>
    </subcellularLocation>
</comment>
<comment type="similarity">
    <text evidence="1">Belongs to the peptidase M48B family.</text>
</comment>